<dbReference type="EC" id="2.1.1.67"/>
<dbReference type="EMBL" id="AY324659">
    <property type="protein sequence ID" value="AAP79318.1"/>
    <property type="molecule type" value="mRNA"/>
</dbReference>
<dbReference type="EMBL" id="AY324667">
    <property type="protein sequence ID" value="AAP79305.1"/>
    <property type="molecule type" value="Genomic_DNA"/>
</dbReference>
<dbReference type="EMBL" id="AY324660">
    <property type="protein sequence ID" value="AAP79305.1"/>
    <property type="status" value="JOINED"/>
    <property type="molecule type" value="Genomic_DNA"/>
</dbReference>
<dbReference type="EMBL" id="AY324661">
    <property type="protein sequence ID" value="AAP79305.1"/>
    <property type="status" value="JOINED"/>
    <property type="molecule type" value="Genomic_DNA"/>
</dbReference>
<dbReference type="EMBL" id="AY324662">
    <property type="protein sequence ID" value="AAP79305.1"/>
    <property type="status" value="JOINED"/>
    <property type="molecule type" value="Genomic_DNA"/>
</dbReference>
<dbReference type="EMBL" id="AY324664">
    <property type="protein sequence ID" value="AAP79305.1"/>
    <property type="status" value="JOINED"/>
    <property type="molecule type" value="Genomic_DNA"/>
</dbReference>
<dbReference type="EMBL" id="AY324666">
    <property type="protein sequence ID" value="AAP79305.1"/>
    <property type="status" value="JOINED"/>
    <property type="molecule type" value="Genomic_DNA"/>
</dbReference>
<dbReference type="EMBL" id="AY324665">
    <property type="protein sequence ID" value="AAP79305.1"/>
    <property type="status" value="JOINED"/>
    <property type="molecule type" value="Genomic_DNA"/>
</dbReference>
<dbReference type="EMBL" id="AY324663">
    <property type="protein sequence ID" value="AAP79305.1"/>
    <property type="status" value="JOINED"/>
    <property type="molecule type" value="Genomic_DNA"/>
</dbReference>
<dbReference type="RefSeq" id="NP_001009836.1">
    <property type="nucleotide sequence ID" value="NM_001009836.1"/>
</dbReference>
<dbReference type="SMR" id="Q6EIC1"/>
<dbReference type="FunCoup" id="Q6EIC1">
    <property type="interactions" value="7"/>
</dbReference>
<dbReference type="STRING" id="9685.ENSFCAP00000003933"/>
<dbReference type="GeneID" id="493759"/>
<dbReference type="KEGG" id="fca:493759"/>
<dbReference type="CTD" id="7172"/>
<dbReference type="InParanoid" id="Q6EIC1"/>
<dbReference type="OrthoDB" id="276151at2759"/>
<dbReference type="Proteomes" id="UP000011712">
    <property type="component" value="Unplaced"/>
</dbReference>
<dbReference type="GO" id="GO:0005737">
    <property type="term" value="C:cytoplasm"/>
    <property type="evidence" value="ECO:0007669"/>
    <property type="project" value="UniProtKB-SubCell"/>
</dbReference>
<dbReference type="GO" id="GO:0008119">
    <property type="term" value="F:thiopurine S-methyltransferase activity"/>
    <property type="evidence" value="ECO:0000318"/>
    <property type="project" value="GO_Central"/>
</dbReference>
<dbReference type="GO" id="GO:0032259">
    <property type="term" value="P:methylation"/>
    <property type="evidence" value="ECO:0007669"/>
    <property type="project" value="UniProtKB-KW"/>
</dbReference>
<dbReference type="FunFam" id="3.40.50.150:FF:000101">
    <property type="entry name" value="Thiopurine S-methyltransferase"/>
    <property type="match status" value="1"/>
</dbReference>
<dbReference type="Gene3D" id="3.40.50.150">
    <property type="entry name" value="Vaccinia Virus protein VP39"/>
    <property type="match status" value="1"/>
</dbReference>
<dbReference type="HAMAP" id="MF_00812">
    <property type="entry name" value="Thiopur_methtran"/>
    <property type="match status" value="1"/>
</dbReference>
<dbReference type="InterPro" id="IPR029063">
    <property type="entry name" value="SAM-dependent_MTases_sf"/>
</dbReference>
<dbReference type="InterPro" id="IPR025835">
    <property type="entry name" value="Thiopurine_S-MeTrfase"/>
</dbReference>
<dbReference type="InterPro" id="IPR008854">
    <property type="entry name" value="TPMT"/>
</dbReference>
<dbReference type="PANTHER" id="PTHR10259">
    <property type="entry name" value="THIOPURINE S-METHYLTRANSFERASE"/>
    <property type="match status" value="1"/>
</dbReference>
<dbReference type="PANTHER" id="PTHR10259:SF11">
    <property type="entry name" value="THIOPURINE S-METHYLTRANSFERASE"/>
    <property type="match status" value="1"/>
</dbReference>
<dbReference type="Pfam" id="PF05724">
    <property type="entry name" value="TPMT"/>
    <property type="match status" value="1"/>
</dbReference>
<dbReference type="PIRSF" id="PIRSF023956">
    <property type="entry name" value="Thiopurine_S-methyltransferase"/>
    <property type="match status" value="1"/>
</dbReference>
<dbReference type="SUPFAM" id="SSF53335">
    <property type="entry name" value="S-adenosyl-L-methionine-dependent methyltransferases"/>
    <property type="match status" value="1"/>
</dbReference>
<dbReference type="PROSITE" id="PS51585">
    <property type="entry name" value="SAM_MT_TPMT"/>
    <property type="match status" value="1"/>
</dbReference>
<evidence type="ECO:0000250" key="1"/>
<evidence type="ECO:0000250" key="2">
    <source>
        <dbReference type="UniProtKB" id="P51580"/>
    </source>
</evidence>
<evidence type="ECO:0000269" key="3">
    <source>
    </source>
</evidence>
<evidence type="ECO:0000305" key="4"/>
<sequence>MDDTSTLTDVKEYPDTEVQKNRVLTLEEWREKWVDGKIGFHQEQGHQLLKKHLDTFLKGENVLRVFFPLCGKAVEMKWFADRGHCVVGVEISELGIREFFTEQNLSYSEEPIMEIPGAKVFKSSSGNISLYCCNLFDLPRVNIGKFDRIWDRGALVAVNPGDRKCYTDIMLSLTRKGFRYLLAVLSYDPTKHPGPPFYVPDAEIKNLFGSTCNIHCLEKVDVFEERHKSWGIDYIVEKLYLLTEK</sequence>
<feature type="chain" id="PRO_0000220099" description="Thiopurine S-methyltransferase">
    <location>
        <begin position="1"/>
        <end position="245"/>
    </location>
</feature>
<feature type="binding site" evidence="1">
    <location>
        <begin position="29"/>
        <end position="40"/>
    </location>
    <ligand>
        <name>S-adenosyl-L-methionine</name>
        <dbReference type="ChEBI" id="CHEBI:59789"/>
    </ligand>
</feature>
<feature type="binding site" evidence="1">
    <location>
        <position position="40"/>
    </location>
    <ligand>
        <name>substrate</name>
    </ligand>
</feature>
<feature type="binding site" evidence="1">
    <location>
        <position position="69"/>
    </location>
    <ligand>
        <name>S-adenosyl-L-methionine</name>
        <dbReference type="ChEBI" id="CHEBI:59789"/>
    </ligand>
</feature>
<feature type="binding site" evidence="1">
    <location>
        <position position="90"/>
    </location>
    <ligand>
        <name>S-adenosyl-L-methionine</name>
        <dbReference type="ChEBI" id="CHEBI:59789"/>
    </ligand>
</feature>
<feature type="binding site" evidence="1">
    <location>
        <position position="152"/>
    </location>
    <ligand>
        <name>S-adenosyl-L-methionine</name>
        <dbReference type="ChEBI" id="CHEBI:59789"/>
    </ligand>
</feature>
<feature type="modified residue" description="N6-acetyllysine" evidence="2">
    <location>
        <position position="58"/>
    </location>
</feature>
<feature type="sequence variant" evidence="3">
    <original>L</original>
    <variation>S</variation>
    <location>
        <position position="7"/>
    </location>
</feature>
<feature type="sequence variant" evidence="3">
    <original>T</original>
    <variation>I</variation>
    <location>
        <position position="8"/>
    </location>
</feature>
<feature type="sequence variant" description="Reduced activity." evidence="3">
    <original>D</original>
    <variation>N</variation>
    <location>
        <position position="15"/>
    </location>
</feature>
<feature type="sequence variant" evidence="3">
    <original>M</original>
    <variation>L</variation>
    <location>
        <position position="113"/>
    </location>
</feature>
<feature type="sequence variant" description="Reduced activity." evidence="3">
    <original>D</original>
    <variation>V</variation>
    <location>
        <position position="233"/>
    </location>
</feature>
<name>TPMT_FELCA</name>
<comment type="catalytic activity">
    <reaction evidence="2">
        <text>S-adenosyl-L-methionine + a thiopurine = S-adenosyl-L-homocysteine + a thiopurine S-methylether.</text>
        <dbReference type="EC" id="2.1.1.67"/>
    </reaction>
</comment>
<comment type="subunit">
    <text evidence="2">Monomer.</text>
</comment>
<comment type="subcellular location">
    <subcellularLocation>
        <location evidence="1">Cytoplasm</location>
    </subcellularLocation>
</comment>
<comment type="similarity">
    <text evidence="4">Belongs to the class I-like SAM-binding methyltransferase superfamily. TPMT family.</text>
</comment>
<proteinExistence type="evidence at transcript level"/>
<gene>
    <name type="primary">TPMT</name>
</gene>
<reference key="1">
    <citation type="journal article" date="2004" name="J. Pharmacol. Exp. Ther.">
        <title>Cat red blood cell thiopurine S-methyltransferase: companion animal pharmacogenetics.</title>
        <authorList>
            <person name="Salavaggione O.E."/>
            <person name="Yang C."/>
            <person name="Kidd L.B."/>
            <person name="Thomae B.A."/>
            <person name="Pankratz V.S."/>
            <person name="Trepanier L.A."/>
            <person name="Weinshilboum R.M."/>
        </authorList>
    </citation>
    <scope>NUCLEOTIDE SEQUENCE [GENOMIC DNA / MRNA]</scope>
    <scope>VARIANTS SER-7; ILE-8; ASN-15; LEU-113 AND VAL-233</scope>
</reference>
<protein>
    <recommendedName>
        <fullName>Thiopurine S-methyltransferase</fullName>
        <ecNumber>2.1.1.67</ecNumber>
    </recommendedName>
    <alternativeName>
        <fullName>Thiopurine methyltransferase</fullName>
    </alternativeName>
</protein>
<accession>Q6EIC1</accession>
<accession>Q6EIC2</accession>
<keyword id="KW-0007">Acetylation</keyword>
<keyword id="KW-0963">Cytoplasm</keyword>
<keyword id="KW-0489">Methyltransferase</keyword>
<keyword id="KW-1185">Reference proteome</keyword>
<keyword id="KW-0949">S-adenosyl-L-methionine</keyword>
<keyword id="KW-0808">Transferase</keyword>
<organism>
    <name type="scientific">Felis catus</name>
    <name type="common">Cat</name>
    <name type="synonym">Felis silvestris catus</name>
    <dbReference type="NCBI Taxonomy" id="9685"/>
    <lineage>
        <taxon>Eukaryota</taxon>
        <taxon>Metazoa</taxon>
        <taxon>Chordata</taxon>
        <taxon>Craniata</taxon>
        <taxon>Vertebrata</taxon>
        <taxon>Euteleostomi</taxon>
        <taxon>Mammalia</taxon>
        <taxon>Eutheria</taxon>
        <taxon>Laurasiatheria</taxon>
        <taxon>Carnivora</taxon>
        <taxon>Feliformia</taxon>
        <taxon>Felidae</taxon>
        <taxon>Felinae</taxon>
        <taxon>Felis</taxon>
    </lineage>
</organism>